<reference key="1">
    <citation type="journal article" date="2006" name="J. Bacteriol.">
        <title>The Methanosarcina barkeri genome: comparative analysis with Methanosarcina acetivorans and Methanosarcina mazei reveals extensive rearrangement within methanosarcinal genomes.</title>
        <authorList>
            <person name="Maeder D.L."/>
            <person name="Anderson I."/>
            <person name="Brettin T.S."/>
            <person name="Bruce D.C."/>
            <person name="Gilna P."/>
            <person name="Han C.S."/>
            <person name="Lapidus A."/>
            <person name="Metcalf W.W."/>
            <person name="Saunders E."/>
            <person name="Tapia R."/>
            <person name="Sowers K.R."/>
        </authorList>
    </citation>
    <scope>NUCLEOTIDE SEQUENCE [LARGE SCALE GENOMIC DNA]</scope>
    <source>
        <strain>Fusaro / DSM 804</strain>
    </source>
</reference>
<name>APGM_METBF</name>
<gene>
    <name evidence="1" type="primary">apgM</name>
    <name type="ordered locus">Mbar_A0860</name>
</gene>
<protein>
    <recommendedName>
        <fullName evidence="1">2,3-bisphosphoglycerate-independent phosphoglycerate mutase</fullName>
        <shortName evidence="1">BPG-independent PGAM</shortName>
        <shortName evidence="1">Phosphoglyceromutase</shortName>
        <shortName evidence="1">aPGAM</shortName>
        <ecNumber evidence="1">5.4.2.12</ecNumber>
    </recommendedName>
</protein>
<accession>Q46E58</accession>
<sequence length="398" mass="42895">MKYAVLIGDGMADYPIDKLGGKTILQAAQTPAMDYIAAHGKIGLAKTIPDGLPAGSDVANMSILGYDPAVYYSGRAPLEAASMGVALASDDVAFRCNLVTIEHGRIKDYSAGHISSEEARILIETLDAELGNEELSFYPGISYRHLLIAKDNLGAETECTPPHDITGKKIEEYLPGGKEGDFFSDLIKKSMIVLELHPVNLRRIEEGKNPANSIWVWGQGSAPKFTPFRELYEKTGAVISAVDLLKGIGVYAGMDVIEVQGATGYLDTNYEGKASAAIEVLKTRDLVFVHVEAPDEAGHEGSIDKKLKAVEDFDSRIVAPILKHAKTSDEPFTILVLPDHPTPISIKTHARDPVPFAVYRTDKTDSDSAEAFDEESAKKGSLGLVKASDLIGILVKAK</sequence>
<comment type="function">
    <text evidence="1">Catalyzes the interconversion of 2-phosphoglycerate and 3-phosphoglycerate.</text>
</comment>
<comment type="catalytic activity">
    <reaction evidence="1">
        <text>(2R)-2-phosphoglycerate = (2R)-3-phosphoglycerate</text>
        <dbReference type="Rhea" id="RHEA:15901"/>
        <dbReference type="ChEBI" id="CHEBI:58272"/>
        <dbReference type="ChEBI" id="CHEBI:58289"/>
        <dbReference type="EC" id="5.4.2.12"/>
    </reaction>
</comment>
<comment type="pathway">
    <text evidence="1">Carbohydrate degradation; glycolysis; pyruvate from D-glyceraldehyde 3-phosphate: step 3/5.</text>
</comment>
<comment type="similarity">
    <text evidence="1">Belongs to the BPG-independent phosphoglycerate mutase family. A-PGAM subfamily.</text>
</comment>
<keyword id="KW-0324">Glycolysis</keyword>
<keyword id="KW-0413">Isomerase</keyword>
<feature type="chain" id="PRO_1000068380" description="2,3-bisphosphoglycerate-independent phosphoglycerate mutase">
    <location>
        <begin position="1"/>
        <end position="398"/>
    </location>
</feature>
<proteinExistence type="inferred from homology"/>
<evidence type="ECO:0000255" key="1">
    <source>
        <dbReference type="HAMAP-Rule" id="MF_01402"/>
    </source>
</evidence>
<organism>
    <name type="scientific">Methanosarcina barkeri (strain Fusaro / DSM 804)</name>
    <dbReference type="NCBI Taxonomy" id="269797"/>
    <lineage>
        <taxon>Archaea</taxon>
        <taxon>Methanobacteriati</taxon>
        <taxon>Methanobacteriota</taxon>
        <taxon>Stenosarchaea group</taxon>
        <taxon>Methanomicrobia</taxon>
        <taxon>Methanosarcinales</taxon>
        <taxon>Methanosarcinaceae</taxon>
        <taxon>Methanosarcina</taxon>
    </lineage>
</organism>
<dbReference type="EC" id="5.4.2.12" evidence="1"/>
<dbReference type="EMBL" id="CP000099">
    <property type="protein sequence ID" value="AAZ69834.1"/>
    <property type="molecule type" value="Genomic_DNA"/>
</dbReference>
<dbReference type="SMR" id="Q46E58"/>
<dbReference type="STRING" id="269797.Mbar_A0860"/>
<dbReference type="PaxDb" id="269797-Mbar_A0860"/>
<dbReference type="KEGG" id="mba:Mbar_A0860"/>
<dbReference type="eggNOG" id="arCOG01696">
    <property type="taxonomic scope" value="Archaea"/>
</dbReference>
<dbReference type="HOGENOM" id="CLU_034906_2_0_2"/>
<dbReference type="OrthoDB" id="52918at2157"/>
<dbReference type="UniPathway" id="UPA00109">
    <property type="reaction ID" value="UER00186"/>
</dbReference>
<dbReference type="GO" id="GO:0046872">
    <property type="term" value="F:metal ion binding"/>
    <property type="evidence" value="ECO:0007669"/>
    <property type="project" value="InterPro"/>
</dbReference>
<dbReference type="GO" id="GO:0004619">
    <property type="term" value="F:phosphoglycerate mutase activity"/>
    <property type="evidence" value="ECO:0007669"/>
    <property type="project" value="UniProtKB-EC"/>
</dbReference>
<dbReference type="GO" id="GO:0006096">
    <property type="term" value="P:glycolytic process"/>
    <property type="evidence" value="ECO:0007669"/>
    <property type="project" value="UniProtKB-UniRule"/>
</dbReference>
<dbReference type="CDD" id="cd16011">
    <property type="entry name" value="iPGM_like"/>
    <property type="match status" value="1"/>
</dbReference>
<dbReference type="Gene3D" id="3.40.720.10">
    <property type="entry name" value="Alkaline Phosphatase, subunit A"/>
    <property type="match status" value="1"/>
</dbReference>
<dbReference type="Gene3D" id="3.30.70.2130">
    <property type="entry name" value="Metalloenzyme domain"/>
    <property type="match status" value="1"/>
</dbReference>
<dbReference type="HAMAP" id="MF_01402_A">
    <property type="entry name" value="ApgM_A"/>
    <property type="match status" value="1"/>
</dbReference>
<dbReference type="InterPro" id="IPR017850">
    <property type="entry name" value="Alkaline_phosphatase_core_sf"/>
</dbReference>
<dbReference type="InterPro" id="IPR023665">
    <property type="entry name" value="ApgAM_prokaryotes"/>
</dbReference>
<dbReference type="InterPro" id="IPR006124">
    <property type="entry name" value="Metalloenzyme"/>
</dbReference>
<dbReference type="InterPro" id="IPR004456">
    <property type="entry name" value="Pglycerate_mutase_ApgM"/>
</dbReference>
<dbReference type="InterPro" id="IPR042253">
    <property type="entry name" value="Pglycerate_mutase_ApgM_sf"/>
</dbReference>
<dbReference type="NCBIfam" id="TIGR00306">
    <property type="entry name" value="apgM"/>
    <property type="match status" value="1"/>
</dbReference>
<dbReference type="NCBIfam" id="TIGR02535">
    <property type="entry name" value="hyp_Hser_kinase"/>
    <property type="match status" value="1"/>
</dbReference>
<dbReference type="NCBIfam" id="NF003242">
    <property type="entry name" value="PRK04200.1"/>
    <property type="match status" value="1"/>
</dbReference>
<dbReference type="PANTHER" id="PTHR31209:SF4">
    <property type="entry name" value="2,3-BISPHOSPHOGLYCERATE-INDEPENDENT PHOSPHOGLYCERATE MUTASE"/>
    <property type="match status" value="1"/>
</dbReference>
<dbReference type="PANTHER" id="PTHR31209">
    <property type="entry name" value="COFACTOR-INDEPENDENT PHOSPHOGLYCERATE MUTASE"/>
    <property type="match status" value="1"/>
</dbReference>
<dbReference type="Pfam" id="PF01676">
    <property type="entry name" value="Metalloenzyme"/>
    <property type="match status" value="1"/>
</dbReference>
<dbReference type="Pfam" id="PF10143">
    <property type="entry name" value="PhosphMutase"/>
    <property type="match status" value="1"/>
</dbReference>
<dbReference type="PIRSF" id="PIRSF006392">
    <property type="entry name" value="IPGAM_arch"/>
    <property type="match status" value="1"/>
</dbReference>
<dbReference type="SUPFAM" id="SSF53649">
    <property type="entry name" value="Alkaline phosphatase-like"/>
    <property type="match status" value="1"/>
</dbReference>